<evidence type="ECO:0000255" key="1">
    <source>
        <dbReference type="HAMAP-Rule" id="MF_00302"/>
    </source>
</evidence>
<reference key="1">
    <citation type="journal article" date="2004" name="Proc. Natl. Acad. Sci. U.S.A.">
        <title>The complete genomic sequence of Nocardia farcinica IFM 10152.</title>
        <authorList>
            <person name="Ishikawa J."/>
            <person name="Yamashita A."/>
            <person name="Mikami Y."/>
            <person name="Hoshino Y."/>
            <person name="Kurita H."/>
            <person name="Hotta K."/>
            <person name="Shiba T."/>
            <person name="Hattori M."/>
        </authorList>
    </citation>
    <scope>NUCLEOTIDE SEQUENCE [LARGE SCALE GENOMIC DNA]</scope>
    <source>
        <strain>IFM 10152</strain>
    </source>
</reference>
<keyword id="KW-1185">Reference proteome</keyword>
<feature type="chain" id="PRO_0000215731" description="ATP-dependent Clp protease adapter protein ClpS">
    <location>
        <begin position="1"/>
        <end position="106"/>
    </location>
</feature>
<accession>Q5Z0W0</accession>
<sequence>MGLCNTNLTLSAAQATPEAVEYTEILEAEDRPWVTVVWDDPVNLMHYVTYIFQKLFGYSKAKATELMLQVHNEGKAVVSSGSRDKMEHDVRRLHAAGLWATMQRDD</sequence>
<comment type="function">
    <text evidence="1">Involved in the modulation of the specificity of the ClpAP-mediated ATP-dependent protein degradation.</text>
</comment>
<comment type="subunit">
    <text evidence="1">Binds to the N-terminal domain of the chaperone ClpA.</text>
</comment>
<comment type="similarity">
    <text evidence="1">Belongs to the ClpS family.</text>
</comment>
<organism>
    <name type="scientific">Nocardia farcinica (strain IFM 10152)</name>
    <dbReference type="NCBI Taxonomy" id="247156"/>
    <lineage>
        <taxon>Bacteria</taxon>
        <taxon>Bacillati</taxon>
        <taxon>Actinomycetota</taxon>
        <taxon>Actinomycetes</taxon>
        <taxon>Mycobacteriales</taxon>
        <taxon>Nocardiaceae</taxon>
        <taxon>Nocardia</taxon>
    </lineage>
</organism>
<name>CLPS_NOCFA</name>
<protein>
    <recommendedName>
        <fullName evidence="1">ATP-dependent Clp protease adapter protein ClpS</fullName>
    </recommendedName>
</protein>
<dbReference type="EMBL" id="AP006618">
    <property type="protein sequence ID" value="BAD55931.1"/>
    <property type="molecule type" value="Genomic_DNA"/>
</dbReference>
<dbReference type="RefSeq" id="WP_011207616.1">
    <property type="nucleotide sequence ID" value="NC_006361.1"/>
</dbReference>
<dbReference type="SMR" id="Q5Z0W0"/>
<dbReference type="STRING" id="247156.NFA_10860"/>
<dbReference type="GeneID" id="61131911"/>
<dbReference type="KEGG" id="nfa:NFA_10860"/>
<dbReference type="eggNOG" id="COG2127">
    <property type="taxonomic scope" value="Bacteria"/>
</dbReference>
<dbReference type="HOGENOM" id="CLU_153743_0_0_11"/>
<dbReference type="OrthoDB" id="162238at2"/>
<dbReference type="Proteomes" id="UP000006820">
    <property type="component" value="Chromosome"/>
</dbReference>
<dbReference type="GO" id="GO:0030163">
    <property type="term" value="P:protein catabolic process"/>
    <property type="evidence" value="ECO:0007669"/>
    <property type="project" value="InterPro"/>
</dbReference>
<dbReference type="GO" id="GO:0006508">
    <property type="term" value="P:proteolysis"/>
    <property type="evidence" value="ECO:0007669"/>
    <property type="project" value="UniProtKB-UniRule"/>
</dbReference>
<dbReference type="Gene3D" id="3.30.1390.10">
    <property type="match status" value="1"/>
</dbReference>
<dbReference type="HAMAP" id="MF_00302">
    <property type="entry name" value="ClpS"/>
    <property type="match status" value="1"/>
</dbReference>
<dbReference type="InterPro" id="IPR022935">
    <property type="entry name" value="ClpS"/>
</dbReference>
<dbReference type="InterPro" id="IPR003769">
    <property type="entry name" value="ClpS_core"/>
</dbReference>
<dbReference type="InterPro" id="IPR014719">
    <property type="entry name" value="Ribosomal_bL12_C/ClpS-like"/>
</dbReference>
<dbReference type="NCBIfam" id="NF000668">
    <property type="entry name" value="PRK00033.1-1"/>
    <property type="match status" value="1"/>
</dbReference>
<dbReference type="Pfam" id="PF02617">
    <property type="entry name" value="ClpS"/>
    <property type="match status" value="1"/>
</dbReference>
<dbReference type="SUPFAM" id="SSF54736">
    <property type="entry name" value="ClpS-like"/>
    <property type="match status" value="1"/>
</dbReference>
<proteinExistence type="inferred from homology"/>
<gene>
    <name evidence="1" type="primary">clpS</name>
    <name type="ordered locus">NFA_10860</name>
</gene>